<keyword id="KW-0997">Cell inner membrane</keyword>
<keyword id="KW-1003">Cell membrane</keyword>
<keyword id="KW-0472">Membrane</keyword>
<keyword id="KW-1185">Reference proteome</keyword>
<keyword id="KW-0812">Transmembrane</keyword>
<keyword id="KW-1133">Transmembrane helix</keyword>
<sequence>MTAYWLAQGVGVIAFLIGITTFFNRDERRFKKQLSVYSAVIGVHFFLLGTYPAGASAILNAIRTLITLRTRSLWVMAIFIVLTGGIGLAKFHHPVELLPVIGTIVSTWALFCCKGLTMRCVMWFSTCCWVIHNFWAGSIGGTMIEGSFLLMNGLNIIRFWRMQKRGIDPFKVEKTPSAVDERG</sequence>
<accession>P42603</accession>
<accession>Q2M9B6</accession>
<reference key="1">
    <citation type="submission" date="1992-09" db="EMBL/GenBank/DDBJ databases">
        <authorList>
            <person name="Mizobuchi K."/>
        </authorList>
    </citation>
    <scope>NUCLEOTIDE SEQUENCE [GENOMIC DNA]</scope>
    <source>
        <strain>K12 / W3110 / ATCC 27325 / DSM 5911</strain>
    </source>
</reference>
<reference key="2">
    <citation type="journal article" date="1997" name="Science">
        <title>The complete genome sequence of Escherichia coli K-12.</title>
        <authorList>
            <person name="Blattner F.R."/>
            <person name="Plunkett G. III"/>
            <person name="Bloch C.A."/>
            <person name="Perna N.T."/>
            <person name="Burland V."/>
            <person name="Riley M."/>
            <person name="Collado-Vides J."/>
            <person name="Glasner J.D."/>
            <person name="Rode C.K."/>
            <person name="Mayhew G.F."/>
            <person name="Gregor J."/>
            <person name="Davis N.W."/>
            <person name="Kirkpatrick H.A."/>
            <person name="Goeden M.A."/>
            <person name="Rose D.J."/>
            <person name="Mau B."/>
            <person name="Shao Y."/>
        </authorList>
    </citation>
    <scope>NUCLEOTIDE SEQUENCE [LARGE SCALE GENOMIC DNA]</scope>
    <source>
        <strain>K12 / MG1655 / ATCC 47076</strain>
    </source>
</reference>
<reference key="3">
    <citation type="journal article" date="2006" name="Mol. Syst. Biol.">
        <title>Highly accurate genome sequences of Escherichia coli K-12 strains MG1655 and W3110.</title>
        <authorList>
            <person name="Hayashi K."/>
            <person name="Morooka N."/>
            <person name="Yamamoto Y."/>
            <person name="Fujita K."/>
            <person name="Isono K."/>
            <person name="Choi S."/>
            <person name="Ohtsubo E."/>
            <person name="Baba T."/>
            <person name="Wanner B.L."/>
            <person name="Mori H."/>
            <person name="Horiuchi T."/>
        </authorList>
    </citation>
    <scope>NUCLEOTIDE SEQUENCE [LARGE SCALE GENOMIC DNA]</scope>
    <source>
        <strain>K12 / W3110 / ATCC 27325 / DSM 5911</strain>
    </source>
</reference>
<reference key="4">
    <citation type="journal article" date="2002" name="Proc. Natl. Acad. Sci. U.S.A.">
        <title>Rapid topology mapping of Escherichia coli inner-membrane proteins by prediction and PhoA/GFP fusion analysis.</title>
        <authorList>
            <person name="Drew D."/>
            <person name="Sjoestrand D."/>
            <person name="Nilsson J."/>
            <person name="Urbig T."/>
            <person name="Chin C.-N."/>
            <person name="de Gier J.-W."/>
            <person name="von Heijne G."/>
        </authorList>
    </citation>
    <scope>TOPOLOGY</scope>
    <source>
        <strain>K12 / JM109 / ATCC 53323</strain>
    </source>
</reference>
<reference key="5">
    <citation type="journal article" date="2005" name="Science">
        <title>Global topology analysis of the Escherichia coli inner membrane proteome.</title>
        <authorList>
            <person name="Daley D.O."/>
            <person name="Rapp M."/>
            <person name="Granseth E."/>
            <person name="Melen K."/>
            <person name="Drew D."/>
            <person name="von Heijne G."/>
        </authorList>
    </citation>
    <scope>TOPOLOGY [LARGE SCALE ANALYSIS]</scope>
    <source>
        <strain>K12 / MG1655 / ATCC 47076</strain>
    </source>
</reference>
<comment type="subcellular location">
    <subcellularLocation>
        <location>Cell inner membrane</location>
        <topology>Multi-pass membrane protein</topology>
    </subcellularLocation>
</comment>
<dbReference type="EMBL" id="D13328">
    <property type="status" value="NOT_ANNOTATED_CDS"/>
    <property type="molecule type" value="Genomic_DNA"/>
</dbReference>
<dbReference type="EMBL" id="U18997">
    <property type="protein sequence ID" value="AAA57892.1"/>
    <property type="molecule type" value="Genomic_DNA"/>
</dbReference>
<dbReference type="EMBL" id="U00096">
    <property type="protein sequence ID" value="AAC76125.1"/>
    <property type="molecule type" value="Genomic_DNA"/>
</dbReference>
<dbReference type="EMBL" id="AP009048">
    <property type="protein sequence ID" value="BAE77140.1"/>
    <property type="molecule type" value="Genomic_DNA"/>
</dbReference>
<dbReference type="PIR" id="G65097">
    <property type="entry name" value="G65097"/>
</dbReference>
<dbReference type="RefSeq" id="NP_417561.1">
    <property type="nucleotide sequence ID" value="NC_000913.3"/>
</dbReference>
<dbReference type="RefSeq" id="WP_000128135.1">
    <property type="nucleotide sequence ID" value="NZ_LN832404.1"/>
</dbReference>
<dbReference type="BioGRID" id="4262406">
    <property type="interactions" value="11"/>
</dbReference>
<dbReference type="FunCoup" id="P42603">
    <property type="interactions" value="174"/>
</dbReference>
<dbReference type="STRING" id="511145.b3090"/>
<dbReference type="TCDB" id="9.B.221.1.1">
    <property type="family name" value="the 5 tms ygjv (ygjv) family"/>
</dbReference>
<dbReference type="PaxDb" id="511145-b3090"/>
<dbReference type="EnsemblBacteria" id="AAC76125">
    <property type="protein sequence ID" value="AAC76125"/>
    <property type="gene ID" value="b3090"/>
</dbReference>
<dbReference type="GeneID" id="947604"/>
<dbReference type="KEGG" id="ecj:JW3061"/>
<dbReference type="KEGG" id="eco:b3090"/>
<dbReference type="KEGG" id="ecoc:C3026_16875"/>
<dbReference type="PATRIC" id="fig|1411691.4.peg.3639"/>
<dbReference type="EchoBASE" id="EB2591"/>
<dbReference type="eggNOG" id="ENOG502ZBTK">
    <property type="taxonomic scope" value="Bacteria"/>
</dbReference>
<dbReference type="HOGENOM" id="CLU_107941_0_0_6"/>
<dbReference type="InParanoid" id="P42603"/>
<dbReference type="OMA" id="LFNSFCW"/>
<dbReference type="OrthoDB" id="7858522at2"/>
<dbReference type="BioCyc" id="EcoCyc:G7608-MONOMER"/>
<dbReference type="PRO" id="PR:P42603"/>
<dbReference type="Proteomes" id="UP000000625">
    <property type="component" value="Chromosome"/>
</dbReference>
<dbReference type="GO" id="GO:0005886">
    <property type="term" value="C:plasma membrane"/>
    <property type="evidence" value="ECO:0000314"/>
    <property type="project" value="EcoCyc"/>
</dbReference>
<dbReference type="InterPro" id="IPR019629">
    <property type="entry name" value="Uncharacterised_HI1736/YgjV"/>
</dbReference>
<dbReference type="InterPro" id="IPR026267">
    <property type="entry name" value="YgjV"/>
</dbReference>
<dbReference type="Pfam" id="PF10688">
    <property type="entry name" value="Imp-YgjV"/>
    <property type="match status" value="1"/>
</dbReference>
<dbReference type="PIRSF" id="PIRSF011443">
    <property type="entry name" value="YgjV"/>
    <property type="match status" value="1"/>
</dbReference>
<name>YGJV_ECOLI</name>
<proteinExistence type="evidence at protein level"/>
<feature type="chain" id="PRO_0000169426" description="Inner membrane protein YgjV">
    <location>
        <begin position="1"/>
        <end position="183"/>
    </location>
</feature>
<feature type="topological domain" description="Periplasmic" evidence="1">
    <location>
        <begin position="1"/>
        <end position="2"/>
    </location>
</feature>
<feature type="transmembrane region" description="Helical" evidence="1">
    <location>
        <begin position="3"/>
        <end position="23"/>
    </location>
</feature>
<feature type="topological domain" description="Cytoplasmic" evidence="1">
    <location>
        <begin position="24"/>
        <end position="38"/>
    </location>
</feature>
<feature type="transmembrane region" description="Helical" evidence="1">
    <location>
        <begin position="39"/>
        <end position="59"/>
    </location>
</feature>
<feature type="topological domain" description="Periplasmic" evidence="1">
    <location>
        <begin position="60"/>
        <end position="71"/>
    </location>
</feature>
<feature type="transmembrane region" description="Helical" evidence="1">
    <location>
        <begin position="72"/>
        <end position="92"/>
    </location>
</feature>
<feature type="transmembrane region" description="Helical" evidence="1">
    <location>
        <begin position="93"/>
        <end position="113"/>
    </location>
</feature>
<feature type="topological domain" description="Periplasmic" evidence="1">
    <location>
        <begin position="114"/>
        <end position="133"/>
    </location>
</feature>
<feature type="transmembrane region" description="Helical" evidence="1">
    <location>
        <begin position="134"/>
        <end position="154"/>
    </location>
</feature>
<feature type="topological domain" description="Cytoplasmic" evidence="1">
    <location>
        <begin position="155"/>
        <end position="183"/>
    </location>
</feature>
<protein>
    <recommendedName>
        <fullName>Inner membrane protein YgjV</fullName>
    </recommendedName>
</protein>
<gene>
    <name type="primary">ygjV</name>
    <name type="ordered locus">b3090</name>
    <name type="ordered locus">JW3061</name>
</gene>
<evidence type="ECO:0000255" key="1"/>
<organism>
    <name type="scientific">Escherichia coli (strain K12)</name>
    <dbReference type="NCBI Taxonomy" id="83333"/>
    <lineage>
        <taxon>Bacteria</taxon>
        <taxon>Pseudomonadati</taxon>
        <taxon>Pseudomonadota</taxon>
        <taxon>Gammaproteobacteria</taxon>
        <taxon>Enterobacterales</taxon>
        <taxon>Enterobacteriaceae</taxon>
        <taxon>Escherichia</taxon>
    </lineage>
</organism>